<comment type="function">
    <text evidence="2">Mitochondrial sodium/calcium antiporter that mediates sodium-dependent calcium efflux from mitochondrion, thereby acting as a key regulator of mitochondrion calcium homeostasis (Probable). Required for patterning of neural circuits: functions in the same pathway as RAC-dependent effectors of the unc-6/netrin signaling pathway to set left/ right patterning of the VD/DD GABAergic circuit (PubMed:28196860).</text>
</comment>
<comment type="activity regulation">
    <text evidence="2">Inhibited by the sodium/calcium exchanger inhibitor CGP-37157.</text>
</comment>
<comment type="subcellular location">
    <subcellularLocation>
        <location evidence="5">Mitochondrion inner membrane</location>
        <topology evidence="1">Multi-pass membrane protein</topology>
    </subcellularLocation>
</comment>
<comment type="tissue specificity">
    <text evidence="2">Expressed in the seam cells of the organism. Expression is visible in the seam cells across all larval stages, and expression persists into the adult stage of the organism.</text>
</comment>
<comment type="similarity">
    <text evidence="4">Belongs to the Ca(2+):cation antiporter (CaCA) (TC 2.A.19) family. SLC24A subfamily.</text>
</comment>
<reference key="1">
    <citation type="journal article" date="1998" name="Science">
        <title>Genome sequence of the nematode C. elegans: a platform for investigating biology.</title>
        <authorList>
            <consortium name="The C. elegans sequencing consortium"/>
        </authorList>
    </citation>
    <scope>NUCLEOTIDE SEQUENCE [LARGE SCALE GENOMIC DNA]</scope>
    <source>
        <strain>Bristol N2</strain>
    </source>
</reference>
<reference key="2">
    <citation type="journal article" date="2017" name="J. Biol. Chem.">
        <title>The NCLX-type Na(+)/Ca(2+) exchanger NCX-9 is required for patterning of neural circuits in Caenorhabditis elegans.</title>
        <authorList>
            <person name="Sharma V."/>
            <person name="Roy S."/>
            <person name="Sekler I."/>
            <person name="O'Halloran D.M."/>
        </authorList>
    </citation>
    <scope>FUNCTION</scope>
    <scope>SUBCELLULAR LOCATION</scope>
    <scope>ACTIVITY REGULATION</scope>
    <scope>TISSUE SPECIFICITY</scope>
    <scope>MUTAGENESIS OF GLY-205</scope>
</reference>
<keyword id="KW-0050">Antiport</keyword>
<keyword id="KW-0106">Calcium</keyword>
<keyword id="KW-0109">Calcium transport</keyword>
<keyword id="KW-0406">Ion transport</keyword>
<keyword id="KW-0472">Membrane</keyword>
<keyword id="KW-0496">Mitochondrion</keyword>
<keyword id="KW-0999">Mitochondrion inner membrane</keyword>
<keyword id="KW-1185">Reference proteome</keyword>
<keyword id="KW-0716">Sensory transduction</keyword>
<keyword id="KW-0732">Signal</keyword>
<keyword id="KW-0915">Sodium</keyword>
<keyword id="KW-0739">Sodium transport</keyword>
<keyword id="KW-0812">Transmembrane</keyword>
<keyword id="KW-1133">Transmembrane helix</keyword>
<keyword id="KW-0813">Transport</keyword>
<proteinExistence type="evidence at protein level"/>
<feature type="signal peptide" evidence="1">
    <location>
        <begin position="1"/>
        <end status="unknown"/>
    </location>
</feature>
<feature type="chain" id="PRO_0000440955" description="Mitochondrial sodium/calcium exchanger protein">
    <location>
        <begin status="unknown"/>
        <end position="651"/>
    </location>
</feature>
<feature type="topological domain" description="Extracellular" evidence="4">
    <location>
        <begin status="unknown"/>
        <end position="50"/>
    </location>
</feature>
<feature type="transmembrane region" description="Helical" evidence="1">
    <location>
        <begin position="51"/>
        <end position="71"/>
    </location>
</feature>
<feature type="topological domain" description="Cytoplasmic" evidence="4">
    <location>
        <begin position="72"/>
        <end position="91"/>
    </location>
</feature>
<feature type="transmembrane region" description="Helical" evidence="1">
    <location>
        <begin position="92"/>
        <end position="112"/>
    </location>
</feature>
<feature type="topological domain" description="Extracellular" evidence="4">
    <location>
        <begin position="113"/>
        <end position="126"/>
    </location>
</feature>
<feature type="transmembrane region" description="Helical" evidence="1">
    <location>
        <begin position="127"/>
        <end position="147"/>
    </location>
</feature>
<feature type="topological domain" description="Cytoplasmic" evidence="4">
    <location>
        <begin position="148"/>
        <end position="161"/>
    </location>
</feature>
<feature type="transmembrane region" description="Helical" evidence="1">
    <location>
        <begin position="162"/>
        <end position="182"/>
    </location>
</feature>
<feature type="topological domain" description="Extracellular" evidence="4">
    <location>
        <position position="183"/>
    </location>
</feature>
<feature type="transmembrane region" description="Helical" evidence="1">
    <location>
        <begin position="184"/>
        <end position="204"/>
    </location>
</feature>
<feature type="topological domain" description="Cytoplasmic" evidence="4">
    <location>
        <begin position="205"/>
        <end position="398"/>
    </location>
</feature>
<feature type="transmembrane region" description="Helical" evidence="1">
    <location>
        <begin position="399"/>
        <end position="419"/>
    </location>
</feature>
<feature type="topological domain" description="Extracellular" evidence="4">
    <location>
        <begin position="420"/>
        <end position="428"/>
    </location>
</feature>
<feature type="transmembrane region" description="Helical" evidence="1">
    <location>
        <begin position="429"/>
        <end position="449"/>
    </location>
</feature>
<feature type="topological domain" description="Cytoplasmic" evidence="4">
    <location>
        <begin position="450"/>
        <end position="458"/>
    </location>
</feature>
<feature type="transmembrane region" description="Helical" evidence="1">
    <location>
        <begin position="459"/>
        <end position="479"/>
    </location>
</feature>
<feature type="topological domain" description="Extracellular" evidence="4">
    <location>
        <begin position="480"/>
        <end position="486"/>
    </location>
</feature>
<feature type="transmembrane region" description="Helical" evidence="1">
    <location>
        <begin position="487"/>
        <end position="507"/>
    </location>
</feature>
<feature type="topological domain" description="Cytoplasmic" evidence="4">
    <location>
        <begin position="508"/>
        <end position="510"/>
    </location>
</feature>
<feature type="transmembrane region" description="Helical" evidence="1">
    <location>
        <begin position="511"/>
        <end position="531"/>
    </location>
</feature>
<feature type="topological domain" description="Extracellular" evidence="4">
    <location>
        <begin position="532"/>
        <end position="559"/>
    </location>
</feature>
<feature type="transmembrane region" description="Helical" evidence="1">
    <location>
        <begin position="560"/>
        <end position="580"/>
    </location>
</feature>
<feature type="topological domain" description="Cytoplasmic" evidence="4">
    <location>
        <begin position="581"/>
        <end position="595"/>
    </location>
</feature>
<feature type="transmembrane region" description="Helical" evidence="1">
    <location>
        <begin position="596"/>
        <end position="616"/>
    </location>
</feature>
<feature type="topological domain" description="Extracellular" evidence="4">
    <location>
        <begin position="617"/>
        <end position="626"/>
    </location>
</feature>
<feature type="transmembrane region" description="Helical" evidence="1">
    <location>
        <begin position="627"/>
        <end position="647"/>
    </location>
</feature>
<feature type="topological domain" description="Cytoplasmic" evidence="4">
    <location>
        <begin position="648"/>
        <end position="651"/>
    </location>
</feature>
<feature type="mutagenesis site" description="In gk-773708; development defects in stereotyped left/right axon guidance choices within the GABAergic motor neuron circuit." evidence="2">
    <original>G</original>
    <variation>E</variation>
    <location>
        <position position="205"/>
    </location>
</feature>
<gene>
    <name evidence="3 6" type="primary">ncx-9</name>
    <name evidence="6" type="ORF">C13D9.8</name>
</gene>
<name>NCX9_CAEEL</name>
<organism>
    <name type="scientific">Caenorhabditis elegans</name>
    <dbReference type="NCBI Taxonomy" id="6239"/>
    <lineage>
        <taxon>Eukaryota</taxon>
        <taxon>Metazoa</taxon>
        <taxon>Ecdysozoa</taxon>
        <taxon>Nematoda</taxon>
        <taxon>Chromadorea</taxon>
        <taxon>Rhabditida</taxon>
        <taxon>Rhabditina</taxon>
        <taxon>Rhabditomorpha</taxon>
        <taxon>Rhabditoidea</taxon>
        <taxon>Rhabditidae</taxon>
        <taxon>Peloderinae</taxon>
        <taxon>Caenorhabditis</taxon>
    </lineage>
</organism>
<evidence type="ECO:0000255" key="1"/>
<evidence type="ECO:0000269" key="2">
    <source>
    </source>
</evidence>
<evidence type="ECO:0000303" key="3">
    <source>
    </source>
</evidence>
<evidence type="ECO:0000305" key="4"/>
<evidence type="ECO:0000305" key="5">
    <source>
    </source>
</evidence>
<evidence type="ECO:0000312" key="6">
    <source>
        <dbReference type="WormBase" id="C13D9.8"/>
    </source>
</evidence>
<dbReference type="EMBL" id="BX284605">
    <property type="protein sequence ID" value="CCD64394.1"/>
    <property type="molecule type" value="Genomic_DNA"/>
</dbReference>
<dbReference type="PIR" id="T03889">
    <property type="entry name" value="T03889"/>
</dbReference>
<dbReference type="RefSeq" id="NP_504342.1">
    <property type="nucleotide sequence ID" value="NM_071941.1"/>
</dbReference>
<dbReference type="FunCoup" id="O16242">
    <property type="interactions" value="312"/>
</dbReference>
<dbReference type="STRING" id="6239.C13D9.8.1"/>
<dbReference type="TCDB" id="2.A.19.4.14">
    <property type="family name" value="the ca(2+):cation antiporter (caca) family"/>
</dbReference>
<dbReference type="PaxDb" id="6239-C13D9.8"/>
<dbReference type="EnsemblMetazoa" id="C13D9.8.1">
    <property type="protein sequence ID" value="C13D9.8.1"/>
    <property type="gene ID" value="WBGene00003574"/>
</dbReference>
<dbReference type="GeneID" id="182576"/>
<dbReference type="KEGG" id="cel:CELE_C13D9.8"/>
<dbReference type="UCSC" id="C13D9.8">
    <property type="organism name" value="c. elegans"/>
</dbReference>
<dbReference type="AGR" id="WB:WBGene00003574"/>
<dbReference type="CTD" id="182576"/>
<dbReference type="WormBase" id="C13D9.8">
    <property type="protein sequence ID" value="CE52885"/>
    <property type="gene ID" value="WBGene00003574"/>
    <property type="gene designation" value="ncx-9"/>
</dbReference>
<dbReference type="eggNOG" id="KOG2399">
    <property type="taxonomic scope" value="Eukaryota"/>
</dbReference>
<dbReference type="GeneTree" id="ENSGT00970000196478"/>
<dbReference type="HOGENOM" id="CLU_004979_3_1_1"/>
<dbReference type="InParanoid" id="O16242"/>
<dbReference type="OMA" id="MRIMACD"/>
<dbReference type="OrthoDB" id="407410at2759"/>
<dbReference type="PhylomeDB" id="O16242"/>
<dbReference type="PRO" id="PR:O16242"/>
<dbReference type="Proteomes" id="UP000001940">
    <property type="component" value="Chromosome V"/>
</dbReference>
<dbReference type="Bgee" id="WBGene00003574">
    <property type="expression patterns" value="Expressed in adult organism"/>
</dbReference>
<dbReference type="GO" id="GO:0016020">
    <property type="term" value="C:membrane"/>
    <property type="evidence" value="ECO:0000318"/>
    <property type="project" value="GO_Central"/>
</dbReference>
<dbReference type="GO" id="GO:0005743">
    <property type="term" value="C:mitochondrial inner membrane"/>
    <property type="evidence" value="ECO:0007669"/>
    <property type="project" value="UniProtKB-SubCell"/>
</dbReference>
<dbReference type="GO" id="GO:0005739">
    <property type="term" value="C:mitochondrion"/>
    <property type="evidence" value="ECO:0000314"/>
    <property type="project" value="UniProtKB"/>
</dbReference>
<dbReference type="GO" id="GO:0005432">
    <property type="term" value="F:calcium:sodium antiporter activity"/>
    <property type="evidence" value="ECO:0000314"/>
    <property type="project" value="UniProtKB"/>
</dbReference>
<dbReference type="GO" id="GO:0099093">
    <property type="term" value="P:calcium export from the mitochondrion"/>
    <property type="evidence" value="ECO:0000314"/>
    <property type="project" value="UniProtKB"/>
</dbReference>
<dbReference type="GO" id="GO:0006874">
    <property type="term" value="P:intracellular calcium ion homeostasis"/>
    <property type="evidence" value="ECO:0000318"/>
    <property type="project" value="GO_Central"/>
</dbReference>
<dbReference type="GO" id="GO:0006812">
    <property type="term" value="P:monoatomic cation transport"/>
    <property type="evidence" value="ECO:0000318"/>
    <property type="project" value="GO_Central"/>
</dbReference>
<dbReference type="GO" id="GO:1905815">
    <property type="term" value="P:regulation of dorsal/ventral axon guidance"/>
    <property type="evidence" value="ECO:0000315"/>
    <property type="project" value="UniProtKB"/>
</dbReference>
<dbReference type="Gene3D" id="1.20.1420.30">
    <property type="entry name" value="NCX, central ion-binding region"/>
    <property type="match status" value="2"/>
</dbReference>
<dbReference type="InterPro" id="IPR051359">
    <property type="entry name" value="CaCA_antiporter"/>
</dbReference>
<dbReference type="InterPro" id="IPR004837">
    <property type="entry name" value="NaCa_Exmemb"/>
</dbReference>
<dbReference type="InterPro" id="IPR044880">
    <property type="entry name" value="NCX_ion-bd_dom_sf"/>
</dbReference>
<dbReference type="PANTHER" id="PTHR12266:SF30">
    <property type="entry name" value="MITOCHONDRIAL SODIUM_CALCIUM EXCHANGER PROTEIN-RELATED"/>
    <property type="match status" value="1"/>
</dbReference>
<dbReference type="PANTHER" id="PTHR12266">
    <property type="entry name" value="NA+/CA2+ K+ INDEPENDENT EXCHANGER"/>
    <property type="match status" value="1"/>
</dbReference>
<dbReference type="Pfam" id="PF01699">
    <property type="entry name" value="Na_Ca_ex"/>
    <property type="match status" value="2"/>
</dbReference>
<sequence length="651" mass="73508">MCSSEECLIDKSWTSEEKCEYIKCNQDSCEGGGYLTWSHYVKCQYNIGVRVILIILGILYLIILFVIMSSIADDFFCPAISGIVSHLRMSESIAGVTFLAFGNGAPDVFSSISSVLTTPKPKADLALGDLFGTSIFVTTVVLAIIIFTKSFKVAIIPTLRDLIFYMTTLAFIVFCFLKFDKIEVWMPATFLGIYGVYVVTVIILGIYRTHRKKRNLKKKNKELEDFLSRPSSAASTTPIFGAMKLKEETISVSALFHFMIGYSQFIKNLTRANLKRTTNNNNNDNKNEKRGIVNLGFSEPYSIPSERKISTIFKQNTFETDLESLESLADLDGSDDEGREEKFGYAHHTVFTSHDQISLVASEIEEIEITTWRSWDWVWDLFNHLKSWPSRDEFSEMNIFIKIVTVIKVVPVFFFKLTVPSNEMSWCKPLFILHCFASIQFALFSIQIITLKPFDGSPGLWLYGLGFSAILAMVAMYFLPLSKEQKYYKEIYSYLGFLMSIAWIYATSNEIVSVVTMIGVVTGLSMELLGLTIMAWSNCIGDIVADIAVVKQGYPKMAMAAAIGGPLFNLLIGFGLPFTIAAAQGKEMELLINPVYRLLMLFLGISLVTTFVALFIQRFTVRRPHAVLLIFIFVVFLIFICLAEFHVLEWN</sequence>
<protein>
    <recommendedName>
        <fullName evidence="4">Mitochondrial sodium/calcium exchanger protein</fullName>
    </recommendedName>
    <alternativeName>
        <fullName evidence="3">Sodium/calcium exchanger 9</fullName>
    </alternativeName>
</protein>
<accession>O16242</accession>